<gene>
    <name evidence="1" type="primary">rplA</name>
    <name type="ordered locus">MHJ_0456</name>
</gene>
<accession>Q4A9M9</accession>
<comment type="function">
    <text evidence="1">Binds directly to 23S rRNA. The L1 stalk is quite mobile in the ribosome, and is involved in E site tRNA release.</text>
</comment>
<comment type="function">
    <text evidence="1">Protein L1 is also a translational repressor protein, it controls the translation of the L11 operon by binding to its mRNA.</text>
</comment>
<comment type="subunit">
    <text evidence="1">Part of the 50S ribosomal subunit.</text>
</comment>
<comment type="similarity">
    <text evidence="1">Belongs to the universal ribosomal protein uL1 family.</text>
</comment>
<keyword id="KW-0678">Repressor</keyword>
<keyword id="KW-0687">Ribonucleoprotein</keyword>
<keyword id="KW-0689">Ribosomal protein</keyword>
<keyword id="KW-0694">RNA-binding</keyword>
<keyword id="KW-0699">rRNA-binding</keyword>
<keyword id="KW-0810">Translation regulation</keyword>
<keyword id="KW-0820">tRNA-binding</keyword>
<sequence>MKKVSRNLLQARQMVDKNRFYSLEEAMELVKKTSYTKFSGSVDLAIRLNLDTRKADQQLRGAVVLPHGTGKSVRVLVATDSSEVAAKSLEAGADLIYSTAELEQNLKIDNFNFDVIVVEPKLMPILGRYGKKLGPKGLMPNPKTGTVSPNPEKAVAEIKKGKANYRADRYGIIHSLIGKTNMEVPQLVENANTLLRLIKRLKPNTVKGNYFKNLTVSASMGPSIKIRFDNL</sequence>
<reference key="1">
    <citation type="journal article" date="2005" name="J. Bacteriol.">
        <title>Swine and poultry pathogens: the complete genome sequences of two strains of Mycoplasma hyopneumoniae and a strain of Mycoplasma synoviae.</title>
        <authorList>
            <person name="Vasconcelos A.T.R."/>
            <person name="Ferreira H.B."/>
            <person name="Bizarro C.V."/>
            <person name="Bonatto S.L."/>
            <person name="Carvalho M.O."/>
            <person name="Pinto P.M."/>
            <person name="Almeida D.F."/>
            <person name="Almeida L.G.P."/>
            <person name="Almeida R."/>
            <person name="Alves-Junior L."/>
            <person name="Assuncao E.N."/>
            <person name="Azevedo V.A.C."/>
            <person name="Bogo M.R."/>
            <person name="Brigido M.M."/>
            <person name="Brocchi M."/>
            <person name="Burity H.A."/>
            <person name="Camargo A.A."/>
            <person name="Camargo S.S."/>
            <person name="Carepo M.S."/>
            <person name="Carraro D.M."/>
            <person name="de Mattos Cascardo J.C."/>
            <person name="Castro L.A."/>
            <person name="Cavalcanti G."/>
            <person name="Chemale G."/>
            <person name="Collevatti R.G."/>
            <person name="Cunha C.W."/>
            <person name="Dallagiovanna B."/>
            <person name="Dambros B.P."/>
            <person name="Dellagostin O.A."/>
            <person name="Falcao C."/>
            <person name="Fantinatti-Garboggini F."/>
            <person name="Felipe M.S.S."/>
            <person name="Fiorentin L."/>
            <person name="Franco G.R."/>
            <person name="Freitas N.S.A."/>
            <person name="Frias D."/>
            <person name="Grangeiro T.B."/>
            <person name="Grisard E.C."/>
            <person name="Guimaraes C.T."/>
            <person name="Hungria M."/>
            <person name="Jardim S.N."/>
            <person name="Krieger M.A."/>
            <person name="Laurino J.P."/>
            <person name="Lima L.F.A."/>
            <person name="Lopes M.I."/>
            <person name="Loreto E.L.S."/>
            <person name="Madeira H.M.F."/>
            <person name="Manfio G.P."/>
            <person name="Maranhao A.Q."/>
            <person name="Martinkovics C.T."/>
            <person name="Medeiros S.R.B."/>
            <person name="Moreira M.A.M."/>
            <person name="Neiva M."/>
            <person name="Ramalho-Neto C.E."/>
            <person name="Nicolas M.F."/>
            <person name="Oliveira S.C."/>
            <person name="Paixao R.F.C."/>
            <person name="Pedrosa F.O."/>
            <person name="Pena S.D.J."/>
            <person name="Pereira M."/>
            <person name="Pereira-Ferrari L."/>
            <person name="Piffer I."/>
            <person name="Pinto L.S."/>
            <person name="Potrich D.P."/>
            <person name="Salim A.C.M."/>
            <person name="Santos F.R."/>
            <person name="Schmitt R."/>
            <person name="Schneider M.P.C."/>
            <person name="Schrank A."/>
            <person name="Schrank I.S."/>
            <person name="Schuck A.F."/>
            <person name="Seuanez H.N."/>
            <person name="Silva D.W."/>
            <person name="Silva R."/>
            <person name="Silva S.C."/>
            <person name="Soares C.M.A."/>
            <person name="Souza K.R.L."/>
            <person name="Souza R.C."/>
            <person name="Staats C.C."/>
            <person name="Steffens M.B.R."/>
            <person name="Teixeira S.M.R."/>
            <person name="Urmenyi T.P."/>
            <person name="Vainstein M.H."/>
            <person name="Zuccherato L.W."/>
            <person name="Simpson A.J.G."/>
            <person name="Zaha A."/>
        </authorList>
    </citation>
    <scope>NUCLEOTIDE SEQUENCE [LARGE SCALE GENOMIC DNA]</scope>
    <source>
        <strain>J / ATCC 25934 / NCTC 10110</strain>
    </source>
</reference>
<protein>
    <recommendedName>
        <fullName evidence="1">Large ribosomal subunit protein uL1</fullName>
    </recommendedName>
    <alternativeName>
        <fullName evidence="2">50S ribosomal protein L1</fullName>
    </alternativeName>
</protein>
<evidence type="ECO:0000255" key="1">
    <source>
        <dbReference type="HAMAP-Rule" id="MF_01318"/>
    </source>
</evidence>
<evidence type="ECO:0000305" key="2"/>
<dbReference type="EMBL" id="AE017243">
    <property type="protein sequence ID" value="AAZ44542.1"/>
    <property type="molecule type" value="Genomic_DNA"/>
</dbReference>
<dbReference type="RefSeq" id="WP_011206292.1">
    <property type="nucleotide sequence ID" value="NC_007295.1"/>
</dbReference>
<dbReference type="SMR" id="Q4A9M9"/>
<dbReference type="GeneID" id="41334755"/>
<dbReference type="KEGG" id="mhj:MHJ_0456"/>
<dbReference type="eggNOG" id="COG0081">
    <property type="taxonomic scope" value="Bacteria"/>
</dbReference>
<dbReference type="HOGENOM" id="CLU_062853_0_0_14"/>
<dbReference type="OrthoDB" id="9803740at2"/>
<dbReference type="Proteomes" id="UP000000548">
    <property type="component" value="Chromosome"/>
</dbReference>
<dbReference type="GO" id="GO:0015934">
    <property type="term" value="C:large ribosomal subunit"/>
    <property type="evidence" value="ECO:0007669"/>
    <property type="project" value="InterPro"/>
</dbReference>
<dbReference type="GO" id="GO:0019843">
    <property type="term" value="F:rRNA binding"/>
    <property type="evidence" value="ECO:0007669"/>
    <property type="project" value="UniProtKB-UniRule"/>
</dbReference>
<dbReference type="GO" id="GO:0003735">
    <property type="term" value="F:structural constituent of ribosome"/>
    <property type="evidence" value="ECO:0007669"/>
    <property type="project" value="InterPro"/>
</dbReference>
<dbReference type="GO" id="GO:0000049">
    <property type="term" value="F:tRNA binding"/>
    <property type="evidence" value="ECO:0007669"/>
    <property type="project" value="UniProtKB-KW"/>
</dbReference>
<dbReference type="GO" id="GO:0006417">
    <property type="term" value="P:regulation of translation"/>
    <property type="evidence" value="ECO:0007669"/>
    <property type="project" value="UniProtKB-KW"/>
</dbReference>
<dbReference type="GO" id="GO:0006412">
    <property type="term" value="P:translation"/>
    <property type="evidence" value="ECO:0007669"/>
    <property type="project" value="UniProtKB-UniRule"/>
</dbReference>
<dbReference type="CDD" id="cd00403">
    <property type="entry name" value="Ribosomal_L1"/>
    <property type="match status" value="1"/>
</dbReference>
<dbReference type="FunFam" id="3.40.50.790:FF:000001">
    <property type="entry name" value="50S ribosomal protein L1"/>
    <property type="match status" value="1"/>
</dbReference>
<dbReference type="Gene3D" id="3.30.190.20">
    <property type="match status" value="1"/>
</dbReference>
<dbReference type="Gene3D" id="3.40.50.790">
    <property type="match status" value="1"/>
</dbReference>
<dbReference type="HAMAP" id="MF_01318_B">
    <property type="entry name" value="Ribosomal_uL1_B"/>
    <property type="match status" value="1"/>
</dbReference>
<dbReference type="InterPro" id="IPR005878">
    <property type="entry name" value="Ribosom_uL1_bac-type"/>
</dbReference>
<dbReference type="InterPro" id="IPR002143">
    <property type="entry name" value="Ribosomal_uL1"/>
</dbReference>
<dbReference type="InterPro" id="IPR023674">
    <property type="entry name" value="Ribosomal_uL1-like"/>
</dbReference>
<dbReference type="InterPro" id="IPR028364">
    <property type="entry name" value="Ribosomal_uL1/biogenesis"/>
</dbReference>
<dbReference type="InterPro" id="IPR016095">
    <property type="entry name" value="Ribosomal_uL1_3-a/b-sand"/>
</dbReference>
<dbReference type="InterPro" id="IPR023673">
    <property type="entry name" value="Ribosomal_uL1_CS"/>
</dbReference>
<dbReference type="NCBIfam" id="TIGR01169">
    <property type="entry name" value="rplA_bact"/>
    <property type="match status" value="1"/>
</dbReference>
<dbReference type="PANTHER" id="PTHR36427">
    <property type="entry name" value="54S RIBOSOMAL PROTEIN L1, MITOCHONDRIAL"/>
    <property type="match status" value="1"/>
</dbReference>
<dbReference type="PANTHER" id="PTHR36427:SF3">
    <property type="entry name" value="LARGE RIBOSOMAL SUBUNIT PROTEIN UL1M"/>
    <property type="match status" value="1"/>
</dbReference>
<dbReference type="Pfam" id="PF00687">
    <property type="entry name" value="Ribosomal_L1"/>
    <property type="match status" value="1"/>
</dbReference>
<dbReference type="PIRSF" id="PIRSF002155">
    <property type="entry name" value="Ribosomal_L1"/>
    <property type="match status" value="1"/>
</dbReference>
<dbReference type="SUPFAM" id="SSF56808">
    <property type="entry name" value="Ribosomal protein L1"/>
    <property type="match status" value="1"/>
</dbReference>
<dbReference type="PROSITE" id="PS01199">
    <property type="entry name" value="RIBOSOMAL_L1"/>
    <property type="match status" value="1"/>
</dbReference>
<organism>
    <name type="scientific">Mesomycoplasma hyopneumoniae (strain J / ATCC 25934 / NCTC 10110)</name>
    <name type="common">Mycoplasma hyopneumoniae</name>
    <dbReference type="NCBI Taxonomy" id="262719"/>
    <lineage>
        <taxon>Bacteria</taxon>
        <taxon>Bacillati</taxon>
        <taxon>Mycoplasmatota</taxon>
        <taxon>Mycoplasmoidales</taxon>
        <taxon>Metamycoplasmataceae</taxon>
        <taxon>Mesomycoplasma</taxon>
    </lineage>
</organism>
<name>RL1_MESHJ</name>
<feature type="chain" id="PRO_0000230615" description="Large ribosomal subunit protein uL1">
    <location>
        <begin position="1"/>
        <end position="231"/>
    </location>
</feature>
<proteinExistence type="inferred from homology"/>